<protein>
    <recommendedName>
        <fullName evidence="2">DNA polymerase sliding clamp 2</fullName>
    </recommendedName>
    <alternativeName>
        <fullName evidence="2">DNA polymerase sliding clamp B1</fullName>
    </alternativeName>
    <alternativeName>
        <fullName evidence="2">Proliferating cell nuclear antigen homolog 3</fullName>
        <shortName evidence="2">PCNA 3</shortName>
    </alternativeName>
</protein>
<evidence type="ECO:0000250" key="1"/>
<evidence type="ECO:0000255" key="2">
    <source>
        <dbReference type="HAMAP-Rule" id="MF_00317"/>
    </source>
</evidence>
<feature type="chain" id="PRO_0000149190" description="DNA polymerase sliding clamp 2">
    <location>
        <begin position="1"/>
        <end position="251"/>
    </location>
</feature>
<reference key="1">
    <citation type="journal article" date="1999" name="DNA Res.">
        <title>Complete genome sequence of an aerobic hyper-thermophilic crenarchaeon, Aeropyrum pernix K1.</title>
        <authorList>
            <person name="Kawarabayasi Y."/>
            <person name="Hino Y."/>
            <person name="Horikawa H."/>
            <person name="Yamazaki S."/>
            <person name="Haikawa Y."/>
            <person name="Jin-no K."/>
            <person name="Takahashi M."/>
            <person name="Sekine M."/>
            <person name="Baba S."/>
            <person name="Ankai A."/>
            <person name="Kosugi H."/>
            <person name="Hosoyama A."/>
            <person name="Fukui S."/>
            <person name="Nagai Y."/>
            <person name="Nishijima K."/>
            <person name="Nakazawa H."/>
            <person name="Takamiya M."/>
            <person name="Masuda S."/>
            <person name="Funahashi T."/>
            <person name="Tanaka T."/>
            <person name="Kudoh Y."/>
            <person name="Yamazaki J."/>
            <person name="Kushida N."/>
            <person name="Oguchi A."/>
            <person name="Aoki K."/>
            <person name="Kubota K."/>
            <person name="Nakamura Y."/>
            <person name="Nomura N."/>
            <person name="Sako Y."/>
            <person name="Kikuchi H."/>
        </authorList>
    </citation>
    <scope>NUCLEOTIDE SEQUENCE [LARGE SCALE GENOMIC DNA]</scope>
    <source>
        <strain>ATCC 700893 / DSM 11879 / JCM 9820 / NBRC 100138 / K1</strain>
    </source>
</reference>
<sequence>MFRLVYTASSKFKYIAQTLAKINDEGVFEFSLDGLRAWIMSPDKTSLAILEMPSLSFEEYMVEEEMRVVLRTDELNKISKRATRNDDIIFQWNAEEQALEVELRDRKLGFSRKFLVPATSVGAEEMRRLKLEPTVSFTILTDDLKAMIQDVKVVGDFAEFEASEGQVVVRSQAEEKEYEWVMKPGDVLLSLEVEEDAKSIYSRQVLEIATKPVGAAESVKVSFASDYPMKIEYTFPNGERMELYMAPSLAG</sequence>
<proteinExistence type="inferred from homology"/>
<gene>
    <name evidence="2" type="primary">pcn2</name>
    <name type="synonym">pcnB1</name>
    <name type="ordered locus">APE_2182</name>
</gene>
<accession>Q9Y9V7</accession>
<comment type="function">
    <text evidence="2">Sliding clamp subunit that acts as a moving platform for DNA processing. Responsible for tethering the catalytic subunit of DNA polymerase and other proteins to DNA during high-speed replication.</text>
</comment>
<comment type="subunit">
    <text evidence="1">Heterotrimer. The subunits circularize to form a toroid; DNA passes through its center. Replication factor C (RFC) is required to load the toroid on the DNA (By similarity).</text>
</comment>
<comment type="similarity">
    <text evidence="2">Belongs to the PCNA family.</text>
</comment>
<organism>
    <name type="scientific">Aeropyrum pernix (strain ATCC 700893 / DSM 11879 / JCM 9820 / NBRC 100138 / K1)</name>
    <dbReference type="NCBI Taxonomy" id="272557"/>
    <lineage>
        <taxon>Archaea</taxon>
        <taxon>Thermoproteota</taxon>
        <taxon>Thermoprotei</taxon>
        <taxon>Desulfurococcales</taxon>
        <taxon>Desulfurococcaceae</taxon>
        <taxon>Aeropyrum</taxon>
    </lineage>
</organism>
<keyword id="KW-0235">DNA replication</keyword>
<keyword id="KW-0238">DNA-binding</keyword>
<keyword id="KW-1185">Reference proteome</keyword>
<name>PCNA2_AERPE</name>
<dbReference type="EMBL" id="BA000002">
    <property type="protein sequence ID" value="BAA81193.1"/>
    <property type="molecule type" value="Genomic_DNA"/>
</dbReference>
<dbReference type="PIR" id="A72526">
    <property type="entry name" value="A72526"/>
</dbReference>
<dbReference type="RefSeq" id="WP_010866850.1">
    <property type="nucleotide sequence ID" value="NC_000854.2"/>
</dbReference>
<dbReference type="SMR" id="Q9Y9V7"/>
<dbReference type="STRING" id="272557.APE_2182"/>
<dbReference type="EnsemblBacteria" id="BAA81193">
    <property type="protein sequence ID" value="BAA81193"/>
    <property type="gene ID" value="APE_2182"/>
</dbReference>
<dbReference type="GeneID" id="1445247"/>
<dbReference type="KEGG" id="ape:APE_2182"/>
<dbReference type="eggNOG" id="arCOG00488">
    <property type="taxonomic scope" value="Archaea"/>
</dbReference>
<dbReference type="Proteomes" id="UP000002518">
    <property type="component" value="Chromosome"/>
</dbReference>
<dbReference type="GO" id="GO:0003677">
    <property type="term" value="F:DNA binding"/>
    <property type="evidence" value="ECO:0007669"/>
    <property type="project" value="UniProtKB-UniRule"/>
</dbReference>
<dbReference type="GO" id="GO:0030337">
    <property type="term" value="F:DNA polymerase processivity factor activity"/>
    <property type="evidence" value="ECO:0007669"/>
    <property type="project" value="UniProtKB-UniRule"/>
</dbReference>
<dbReference type="GO" id="GO:0006272">
    <property type="term" value="P:leading strand elongation"/>
    <property type="evidence" value="ECO:0007669"/>
    <property type="project" value="TreeGrafter"/>
</dbReference>
<dbReference type="GO" id="GO:0006275">
    <property type="term" value="P:regulation of DNA replication"/>
    <property type="evidence" value="ECO:0007669"/>
    <property type="project" value="UniProtKB-UniRule"/>
</dbReference>
<dbReference type="CDD" id="cd00577">
    <property type="entry name" value="PCNA"/>
    <property type="match status" value="1"/>
</dbReference>
<dbReference type="Gene3D" id="3.70.10.10">
    <property type="match status" value="1"/>
</dbReference>
<dbReference type="HAMAP" id="MF_00317">
    <property type="entry name" value="DNApol_clamp_arch"/>
    <property type="match status" value="1"/>
</dbReference>
<dbReference type="InterPro" id="IPR046938">
    <property type="entry name" value="DNA_clamp_sf"/>
</dbReference>
<dbReference type="InterPro" id="IPR000730">
    <property type="entry name" value="Pr_cel_nuc_antig"/>
</dbReference>
<dbReference type="InterPro" id="IPR022659">
    <property type="entry name" value="Pr_cel_nuc_antig_CS"/>
</dbReference>
<dbReference type="InterPro" id="IPR022648">
    <property type="entry name" value="Pr_cel_nuc_antig_N"/>
</dbReference>
<dbReference type="NCBIfam" id="NF002218">
    <property type="entry name" value="PRK01115.1-1"/>
    <property type="match status" value="1"/>
</dbReference>
<dbReference type="PANTHER" id="PTHR11352">
    <property type="entry name" value="PROLIFERATING CELL NUCLEAR ANTIGEN"/>
    <property type="match status" value="1"/>
</dbReference>
<dbReference type="PANTHER" id="PTHR11352:SF0">
    <property type="entry name" value="PROLIFERATING CELL NUCLEAR ANTIGEN"/>
    <property type="match status" value="1"/>
</dbReference>
<dbReference type="Pfam" id="PF00705">
    <property type="entry name" value="PCNA_N"/>
    <property type="match status" value="1"/>
</dbReference>
<dbReference type="SUPFAM" id="SSF55979">
    <property type="entry name" value="DNA clamp"/>
    <property type="match status" value="2"/>
</dbReference>
<dbReference type="PROSITE" id="PS01251">
    <property type="entry name" value="PCNA_1"/>
    <property type="match status" value="1"/>
</dbReference>